<comment type="function">
    <text evidence="3">Hydrolyzes both 3- and 4-linked fucoses in Lewis determinants. Not active on neither 2-linked fucose nor on fucose in alpha-1,3-linkage to the innermost GlcNAc.</text>
</comment>
<comment type="catalytic activity">
    <reaction evidence="3">
        <text>an alpha-L-fucoside + H2O = L-fucose + an alcohol</text>
        <dbReference type="Rhea" id="RHEA:12288"/>
        <dbReference type="ChEBI" id="CHEBI:2181"/>
        <dbReference type="ChEBI" id="CHEBI:15377"/>
        <dbReference type="ChEBI" id="CHEBI:28349"/>
        <dbReference type="ChEBI" id="CHEBI:30879"/>
        <dbReference type="EC" id="3.2.1.51"/>
    </reaction>
    <physiologicalReaction direction="left-to-right" evidence="8">
        <dbReference type="Rhea" id="RHEA:12289"/>
    </physiologicalReaction>
</comment>
<comment type="biophysicochemical properties">
    <kinetics>
        <KM evidence="3">28 uM for lacto-N-fucopentaose II</KM>
        <KM evidence="3">6.2 uM for 3-fucosyllactose</KM>
    </kinetics>
    <phDependence>
        <text evidence="3">Optimum pH is 5. Activity decreases sharply toward pH 7.</text>
    </phDependence>
</comment>
<comment type="subcellular location">
    <subcellularLocation>
        <location evidence="2">Secreted</location>
        <location evidence="2">Extracellular space</location>
        <location evidence="2">Apoplast</location>
    </subcellularLocation>
</comment>
<comment type="similarity">
    <text evidence="6">Belongs to the glycosyl hydrolase 29 family.</text>
</comment>
<comment type="caution">
    <text evidence="7">Was reported by PubMed:11788770 to be an alpha-1,2-fucosidase.</text>
</comment>
<comment type="sequence caution" evidence="6">
    <conflict type="erroneous gene model prediction">
        <sequence resource="EMBL-CDS" id="AAC98456"/>
    </conflict>
</comment>
<keyword id="KW-0052">Apoplast</keyword>
<keyword id="KW-0325">Glycoprotein</keyword>
<keyword id="KW-0326">Glycosidase</keyword>
<keyword id="KW-0378">Hydrolase</keyword>
<keyword id="KW-1185">Reference proteome</keyword>
<keyword id="KW-0964">Secreted</keyword>
<keyword id="KW-0732">Signal</keyword>
<gene>
    <name type="primary">FUC1</name>
    <name type="ordered locus">At2g28100</name>
    <name type="ORF">F24D13.11</name>
</gene>
<evidence type="ECO:0000255" key="1"/>
<evidence type="ECO:0000269" key="2">
    <source>
    </source>
</evidence>
<evidence type="ECO:0000269" key="3">
    <source>
    </source>
</evidence>
<evidence type="ECO:0000303" key="4">
    <source>
    </source>
</evidence>
<evidence type="ECO:0000303" key="5">
    <source>
    </source>
</evidence>
<evidence type="ECO:0000305" key="6"/>
<evidence type="ECO:0000305" key="7">
    <source>
    </source>
</evidence>
<evidence type="ECO:0000305" key="8">
    <source>
    </source>
</evidence>
<dbReference type="EC" id="3.2.1.51" evidence="3"/>
<dbReference type="EMBL" id="AC005851">
    <property type="protein sequence ID" value="AAC98456.1"/>
    <property type="status" value="ALT_SEQ"/>
    <property type="molecule type" value="Genomic_DNA"/>
</dbReference>
<dbReference type="EMBL" id="CP002685">
    <property type="protein sequence ID" value="AEC08079.1"/>
    <property type="molecule type" value="Genomic_DNA"/>
</dbReference>
<dbReference type="EMBL" id="AK119039">
    <property type="protein sequence ID" value="BAC43615.1"/>
    <property type="molecule type" value="mRNA"/>
</dbReference>
<dbReference type="PIR" id="G84680">
    <property type="entry name" value="G84680"/>
</dbReference>
<dbReference type="RefSeq" id="NP_180377.2">
    <property type="nucleotide sequence ID" value="NM_128370.3"/>
</dbReference>
<dbReference type="SMR" id="Q8GW72"/>
<dbReference type="BioGRID" id="2705">
    <property type="interactions" value="1"/>
</dbReference>
<dbReference type="FunCoup" id="Q8GW72">
    <property type="interactions" value="146"/>
</dbReference>
<dbReference type="IntAct" id="Q8GW72">
    <property type="interactions" value="1"/>
</dbReference>
<dbReference type="STRING" id="3702.Q8GW72"/>
<dbReference type="CAZy" id="GH29">
    <property type="family name" value="Glycoside Hydrolase Family 29"/>
</dbReference>
<dbReference type="GlyCosmos" id="Q8GW72">
    <property type="glycosylation" value="6 sites, No reported glycans"/>
</dbReference>
<dbReference type="GlyGen" id="Q8GW72">
    <property type="glycosylation" value="6 sites"/>
</dbReference>
<dbReference type="iPTMnet" id="Q8GW72"/>
<dbReference type="PaxDb" id="3702-AT2G28100.1"/>
<dbReference type="ProteomicsDB" id="230046"/>
<dbReference type="EnsemblPlants" id="AT2G28100.1">
    <property type="protein sequence ID" value="AT2G28100.1"/>
    <property type="gene ID" value="AT2G28100"/>
</dbReference>
<dbReference type="GeneID" id="817355"/>
<dbReference type="Gramene" id="AT2G28100.1">
    <property type="protein sequence ID" value="AT2G28100.1"/>
    <property type="gene ID" value="AT2G28100"/>
</dbReference>
<dbReference type="KEGG" id="ath:AT2G28100"/>
<dbReference type="Araport" id="AT2G28100"/>
<dbReference type="TAIR" id="AT2G28100">
    <property type="gene designation" value="FUC1"/>
</dbReference>
<dbReference type="eggNOG" id="KOG3340">
    <property type="taxonomic scope" value="Eukaryota"/>
</dbReference>
<dbReference type="HOGENOM" id="CLU_002934_7_1_1"/>
<dbReference type="InParanoid" id="Q8GW72"/>
<dbReference type="OMA" id="YFFDSWF"/>
<dbReference type="OrthoDB" id="6039950at2759"/>
<dbReference type="BioCyc" id="ARA:AT2G28100-MONOMER"/>
<dbReference type="BioCyc" id="MetaCyc:AT2G28100-MONOMER"/>
<dbReference type="PRO" id="PR:Q8GW72"/>
<dbReference type="Proteomes" id="UP000006548">
    <property type="component" value="Chromosome 2"/>
</dbReference>
<dbReference type="ExpressionAtlas" id="Q8GW72">
    <property type="expression patterns" value="baseline and differential"/>
</dbReference>
<dbReference type="GO" id="GO:0048046">
    <property type="term" value="C:apoplast"/>
    <property type="evidence" value="ECO:0007669"/>
    <property type="project" value="UniProtKB-SubCell"/>
</dbReference>
<dbReference type="GO" id="GO:0000325">
    <property type="term" value="C:plant-type vacuole"/>
    <property type="evidence" value="ECO:0007005"/>
    <property type="project" value="TAIR"/>
</dbReference>
<dbReference type="GO" id="GO:0099503">
    <property type="term" value="C:secretory vesicle"/>
    <property type="evidence" value="ECO:0007005"/>
    <property type="project" value="TAIR"/>
</dbReference>
<dbReference type="GO" id="GO:0004560">
    <property type="term" value="F:alpha-L-fucosidase activity"/>
    <property type="evidence" value="ECO:0000314"/>
    <property type="project" value="TAIR"/>
</dbReference>
<dbReference type="GO" id="GO:0005975">
    <property type="term" value="P:carbohydrate metabolic process"/>
    <property type="evidence" value="ECO:0007669"/>
    <property type="project" value="InterPro"/>
</dbReference>
<dbReference type="GO" id="GO:0006516">
    <property type="term" value="P:glycoprotein catabolic process"/>
    <property type="evidence" value="ECO:0000304"/>
    <property type="project" value="TAIR"/>
</dbReference>
<dbReference type="FunFam" id="2.60.120.260:FF:000093">
    <property type="entry name" value="Alpha-L-fucosidase 1"/>
    <property type="match status" value="1"/>
</dbReference>
<dbReference type="FunFam" id="3.20.20.80:FF:000052">
    <property type="entry name" value="Putative alpha-L-fucosidase 1"/>
    <property type="match status" value="1"/>
</dbReference>
<dbReference type="Gene3D" id="2.60.120.260">
    <property type="entry name" value="Galactose-binding domain-like"/>
    <property type="match status" value="1"/>
</dbReference>
<dbReference type="Gene3D" id="3.20.20.80">
    <property type="entry name" value="Glycosidases"/>
    <property type="match status" value="1"/>
</dbReference>
<dbReference type="InterPro" id="IPR008979">
    <property type="entry name" value="Galactose-bd-like_sf"/>
</dbReference>
<dbReference type="InterPro" id="IPR000933">
    <property type="entry name" value="Glyco_hydro_29"/>
</dbReference>
<dbReference type="InterPro" id="IPR017853">
    <property type="entry name" value="Glycoside_hydrolase_SF"/>
</dbReference>
<dbReference type="PANTHER" id="PTHR10030">
    <property type="entry name" value="ALPHA-L-FUCOSIDASE"/>
    <property type="match status" value="1"/>
</dbReference>
<dbReference type="PANTHER" id="PTHR10030:SF27">
    <property type="entry name" value="ALPHA-L-FUCOSIDASE 1"/>
    <property type="match status" value="1"/>
</dbReference>
<dbReference type="Pfam" id="PF01120">
    <property type="entry name" value="Alpha_L_fucos"/>
    <property type="match status" value="1"/>
</dbReference>
<dbReference type="SMART" id="SM00812">
    <property type="entry name" value="Alpha_L_fucos"/>
    <property type="match status" value="1"/>
</dbReference>
<dbReference type="SUPFAM" id="SSF51445">
    <property type="entry name" value="(Trans)glycosidases"/>
    <property type="match status" value="1"/>
</dbReference>
<dbReference type="SUPFAM" id="SSF49785">
    <property type="entry name" value="Galactose-binding domain-like"/>
    <property type="match status" value="1"/>
</dbReference>
<name>FUCO1_ARATH</name>
<feature type="signal peptide" evidence="1">
    <location>
        <begin position="1"/>
        <end position="23"/>
    </location>
</feature>
<feature type="chain" id="PRO_0000225692" description="Alpha-L-fucosidase 1">
    <location>
        <begin position="24"/>
        <end position="506"/>
    </location>
</feature>
<feature type="glycosylation site" description="N-linked (GlcNAc...) asparagine" evidence="1">
    <location>
        <position position="22"/>
    </location>
</feature>
<feature type="glycosylation site" description="N-linked (GlcNAc...) asparagine" evidence="1">
    <location>
        <position position="82"/>
    </location>
</feature>
<feature type="glycosylation site" description="N-linked (GlcNAc...) asparagine" evidence="1">
    <location>
        <position position="248"/>
    </location>
</feature>
<feature type="glycosylation site" description="N-linked (GlcNAc...) asparagine" evidence="1">
    <location>
        <position position="320"/>
    </location>
</feature>
<feature type="glycosylation site" description="N-linked (GlcNAc...) asparagine" evidence="1">
    <location>
        <position position="355"/>
    </location>
</feature>
<feature type="glycosylation site" description="N-linked (GlcNAc...) asparagine" evidence="1">
    <location>
        <position position="487"/>
    </location>
</feature>
<feature type="sequence conflict" description="In Ref. 3; BAC43615." evidence="6" ref="3">
    <original>E</original>
    <variation>G</variation>
    <location>
        <position position="135"/>
    </location>
</feature>
<accession>Q8GW72</accession>
<accession>Q9ZUV2</accession>
<sequence>MNSQITLFFFFFSILSLSQISNSSSLLKPHPCPILPLPSSQQLQWQLGSMAMFLHFGPNTFTDSEWGTGKANPSIFNPTHLNASQWVQIAKDSGFSRVILTAKHHDGFCLWPSEYTDYSVKSSQWRNGAGDVVAELASAAKEAGIGLGLYLSPWDRHEQCYGKTLEYNEFYLSQMTELLTKYGEIKEVWLDGAKGDGEKDMEYFFDTWFSLIHQLQPKAVIFSDAGPDVRWIGDEAGLAGSTCWSLFNRTNAKIGDTEPSYSQEGDGYGQDWVPAECDVSIRPGWFWHASESPKPAVQLLDIYYNSVGRNCLFLLNVPPNSSGLISEQDIKVLEEFSEMKNSIFSNNLARKAFVNSSSIRGDQSSQFGPKNVLEEGLDKYWAPEENQNEWVLYLEFKDLVSFNVLEIREPIHMGQRIASFHLETRKTGSGEWERVVSGTTVGNKRLLRFLNVVESRSLKLVVDKARTDPLISYLGLYMDKFSGSSRNTTKITITRTLKEEQQLHDL</sequence>
<protein>
    <recommendedName>
        <fullName>Alpha-L-fucosidase 1</fullName>
        <ecNumber evidence="3">3.2.1.51</ecNumber>
    </recommendedName>
    <alternativeName>
        <fullName evidence="5">Alpha-1,3/4-fucosidase</fullName>
        <shortName evidence="4">AtFUC1</shortName>
    </alternativeName>
    <alternativeName>
        <fullName>Alpha-L-fucoside fucohydrolase</fullName>
    </alternativeName>
</protein>
<reference key="1">
    <citation type="journal article" date="1999" name="Nature">
        <title>Sequence and analysis of chromosome 2 of the plant Arabidopsis thaliana.</title>
        <authorList>
            <person name="Lin X."/>
            <person name="Kaul S."/>
            <person name="Rounsley S.D."/>
            <person name="Shea T.P."/>
            <person name="Benito M.-I."/>
            <person name="Town C.D."/>
            <person name="Fujii C.Y."/>
            <person name="Mason T.M."/>
            <person name="Bowman C.L."/>
            <person name="Barnstead M.E."/>
            <person name="Feldblyum T.V."/>
            <person name="Buell C.R."/>
            <person name="Ketchum K.A."/>
            <person name="Lee J.J."/>
            <person name="Ronning C.M."/>
            <person name="Koo H.L."/>
            <person name="Moffat K.S."/>
            <person name="Cronin L.A."/>
            <person name="Shen M."/>
            <person name="Pai G."/>
            <person name="Van Aken S."/>
            <person name="Umayam L."/>
            <person name="Tallon L.J."/>
            <person name="Gill J.E."/>
            <person name="Adams M.D."/>
            <person name="Carrera A.J."/>
            <person name="Creasy T.H."/>
            <person name="Goodman H.M."/>
            <person name="Somerville C.R."/>
            <person name="Copenhaver G.P."/>
            <person name="Preuss D."/>
            <person name="Nierman W.C."/>
            <person name="White O."/>
            <person name="Eisen J.A."/>
            <person name="Salzberg S.L."/>
            <person name="Fraser C.M."/>
            <person name="Venter J.C."/>
        </authorList>
    </citation>
    <scope>NUCLEOTIDE SEQUENCE [LARGE SCALE GENOMIC DNA]</scope>
    <source>
        <strain>cv. Columbia</strain>
    </source>
</reference>
<reference key="2">
    <citation type="journal article" date="2017" name="Plant J.">
        <title>Araport11: a complete reannotation of the Arabidopsis thaliana reference genome.</title>
        <authorList>
            <person name="Cheng C.Y."/>
            <person name="Krishnakumar V."/>
            <person name="Chan A.P."/>
            <person name="Thibaud-Nissen F."/>
            <person name="Schobel S."/>
            <person name="Town C.D."/>
        </authorList>
    </citation>
    <scope>GENOME REANNOTATION</scope>
    <source>
        <strain>cv. Columbia</strain>
    </source>
</reference>
<reference key="3">
    <citation type="journal article" date="2002" name="Science">
        <title>Functional annotation of a full-length Arabidopsis cDNA collection.</title>
        <authorList>
            <person name="Seki M."/>
            <person name="Narusaka M."/>
            <person name="Kamiya A."/>
            <person name="Ishida J."/>
            <person name="Satou M."/>
            <person name="Sakurai T."/>
            <person name="Nakajima M."/>
            <person name="Enju A."/>
            <person name="Akiyama K."/>
            <person name="Oono Y."/>
            <person name="Muramatsu M."/>
            <person name="Hayashizaki Y."/>
            <person name="Kawai J."/>
            <person name="Carninci P."/>
            <person name="Itoh M."/>
            <person name="Ishii Y."/>
            <person name="Arakawa T."/>
            <person name="Shibata K."/>
            <person name="Shinagawa A."/>
            <person name="Shinozaki K."/>
        </authorList>
    </citation>
    <scope>NUCLEOTIDE SEQUENCE [LARGE SCALE MRNA]</scope>
    <source>
        <strain>cv. Columbia</strain>
    </source>
</reference>
<reference key="4">
    <citation type="journal article" date="2002" name="Plant Physiol.">
        <title>AtFXG1, an Arabidopsis gene encoding alpha-L-fucosidase active against fucosylated xyloglucan oligosaccharides.</title>
        <authorList>
            <person name="de La Torre F."/>
            <person name="Sampedro J."/>
            <person name="Zarra I."/>
            <person name="Revilla G."/>
        </authorList>
    </citation>
    <scope>PRELIMINARY FUNCTION</scope>
    <scope>SUBCELLULAR LOCATION</scope>
</reference>
<reference key="5">
    <citation type="journal article" date="2006" name="Phytochemistry">
        <title>Molecular cloning and characterization of a plant alpha1,3/4-fucosidase based on sequence tags from almond fucosidase I.</title>
        <authorList>
            <person name="Zeleny R."/>
            <person name="Leonard R."/>
            <person name="Dorfner G."/>
            <person name="Dalik T."/>
            <person name="Kolarich D."/>
            <person name="Altmann F."/>
        </authorList>
    </citation>
    <scope>FUNCTION</scope>
    <scope>CATALYTIC ACTIVITY</scope>
    <scope>BIOPHYSICOCHEMICAL PROPERTIES</scope>
</reference>
<organism>
    <name type="scientific">Arabidopsis thaliana</name>
    <name type="common">Mouse-ear cress</name>
    <dbReference type="NCBI Taxonomy" id="3702"/>
    <lineage>
        <taxon>Eukaryota</taxon>
        <taxon>Viridiplantae</taxon>
        <taxon>Streptophyta</taxon>
        <taxon>Embryophyta</taxon>
        <taxon>Tracheophyta</taxon>
        <taxon>Spermatophyta</taxon>
        <taxon>Magnoliopsida</taxon>
        <taxon>eudicotyledons</taxon>
        <taxon>Gunneridae</taxon>
        <taxon>Pentapetalae</taxon>
        <taxon>rosids</taxon>
        <taxon>malvids</taxon>
        <taxon>Brassicales</taxon>
        <taxon>Brassicaceae</taxon>
        <taxon>Camelineae</taxon>
        <taxon>Arabidopsis</taxon>
    </lineage>
</organism>
<proteinExistence type="evidence at protein level"/>